<proteinExistence type="inferred from homology"/>
<name>EFTU_LEPIN</name>
<organism>
    <name type="scientific">Leptospira interrogans serogroup Icterohaemorrhagiae serovar Lai (strain 56601)</name>
    <dbReference type="NCBI Taxonomy" id="189518"/>
    <lineage>
        <taxon>Bacteria</taxon>
        <taxon>Pseudomonadati</taxon>
        <taxon>Spirochaetota</taxon>
        <taxon>Spirochaetia</taxon>
        <taxon>Leptospirales</taxon>
        <taxon>Leptospiraceae</taxon>
        <taxon>Leptospira</taxon>
    </lineage>
</organism>
<sequence length="401" mass="43574">MAKEKFDRSKPHLNVGTIGHVDHGKTTLTAAITTTLAKAIGGKNKAVAYDQIDNAPEEKARGITIATSHQEYETANRHYAHVDCPGHADYVKNMITGAAQMDAAILVVSATDGPMPQTKEHILLARQVGVPYVIVFINKADMLAADERAEMIEMVEMDVRELLNKYSFPGDTTPIVHGSAVKALEGDESEIGMPAILKLMEALDTFVPNPKRVIDKPFLMPVEDVFSITGRGTVATGRVEQGVLKVNDEVEIIGIRPTTKTVVTGIEMFRKLLDQAEAGDNIGALLRGTKKEEIERGQVLAKPGSITPHKKFAAEVYVLTKDEGGRHTPFINNYRPQFYFRTTDVTGVCNLPNGVEMVMPGDNVSLTVELISPIAMDKGLKFAIREGGRTIGSGVVAEITE</sequence>
<gene>
    <name evidence="2" type="primary">tuf</name>
    <name type="ordered locus">LA_0737</name>
</gene>
<protein>
    <recommendedName>
        <fullName evidence="2">Elongation factor Tu</fullName>
        <shortName evidence="2">EF-Tu</shortName>
        <ecNumber evidence="2">3.6.5.3</ecNumber>
    </recommendedName>
</protein>
<keyword id="KW-0963">Cytoplasm</keyword>
<keyword id="KW-0251">Elongation factor</keyword>
<keyword id="KW-0342">GTP-binding</keyword>
<keyword id="KW-0378">Hydrolase</keyword>
<keyword id="KW-0460">Magnesium</keyword>
<keyword id="KW-0479">Metal-binding</keyword>
<keyword id="KW-0547">Nucleotide-binding</keyword>
<keyword id="KW-0648">Protein biosynthesis</keyword>
<keyword id="KW-1185">Reference proteome</keyword>
<reference key="1">
    <citation type="journal article" date="2000" name="FEMS Microbiol. Lett.">
        <title>Characterization of the Leptospira interrogans S10-spc-alpha operon.</title>
        <authorList>
            <person name="Zuerner R.L."/>
            <person name="Hartskeerl R.A."/>
            <person name="van de Kemp H."/>
            <person name="Bal A.E."/>
        </authorList>
    </citation>
    <scope>NUCLEOTIDE SEQUENCE [GENOMIC DNA]</scope>
    <source>
        <strain>Lai / Serogroup Icterohaemorrhagiae / Serovar lai</strain>
    </source>
</reference>
<reference key="2">
    <citation type="journal article" date="2003" name="Nature">
        <title>Unique physiological and pathogenic features of Leptospira interrogans revealed by whole-genome sequencing.</title>
        <authorList>
            <person name="Ren S.-X."/>
            <person name="Fu G."/>
            <person name="Jiang X.-G."/>
            <person name="Zeng R."/>
            <person name="Miao Y.-G."/>
            <person name="Xu H."/>
            <person name="Zhang Y.-X."/>
            <person name="Xiong H."/>
            <person name="Lu G."/>
            <person name="Lu L.-F."/>
            <person name="Jiang H.-Q."/>
            <person name="Jia J."/>
            <person name="Tu Y.-F."/>
            <person name="Jiang J.-X."/>
            <person name="Gu W.-Y."/>
            <person name="Zhang Y.-Q."/>
            <person name="Cai Z."/>
            <person name="Sheng H.-H."/>
            <person name="Yin H.-F."/>
            <person name="Zhang Y."/>
            <person name="Zhu G.-F."/>
            <person name="Wan M."/>
            <person name="Huang H.-L."/>
            <person name="Qian Z."/>
            <person name="Wang S.-Y."/>
            <person name="Ma W."/>
            <person name="Yao Z.-J."/>
            <person name="Shen Y."/>
            <person name="Qiang B.-Q."/>
            <person name="Xia Q.-C."/>
            <person name="Guo X.-K."/>
            <person name="Danchin A."/>
            <person name="Saint Girons I."/>
            <person name="Somerville R.L."/>
            <person name="Wen Y.-M."/>
            <person name="Shi M.-H."/>
            <person name="Chen Z."/>
            <person name="Xu J.-G."/>
            <person name="Zhao G.-P."/>
        </authorList>
    </citation>
    <scope>NUCLEOTIDE SEQUENCE [LARGE SCALE GENOMIC DNA]</scope>
    <source>
        <strain>56601</strain>
    </source>
</reference>
<comment type="function">
    <text evidence="2">GTP hydrolase that promotes the GTP-dependent binding of aminoacyl-tRNA to the A-site of ribosomes during protein biosynthesis.</text>
</comment>
<comment type="catalytic activity">
    <reaction evidence="2">
        <text>GTP + H2O = GDP + phosphate + H(+)</text>
        <dbReference type="Rhea" id="RHEA:19669"/>
        <dbReference type="ChEBI" id="CHEBI:15377"/>
        <dbReference type="ChEBI" id="CHEBI:15378"/>
        <dbReference type="ChEBI" id="CHEBI:37565"/>
        <dbReference type="ChEBI" id="CHEBI:43474"/>
        <dbReference type="ChEBI" id="CHEBI:58189"/>
        <dbReference type="EC" id="3.6.5.3"/>
    </reaction>
    <physiologicalReaction direction="left-to-right" evidence="2">
        <dbReference type="Rhea" id="RHEA:19670"/>
    </physiologicalReaction>
</comment>
<comment type="subunit">
    <text evidence="2">Monomer.</text>
</comment>
<comment type="subcellular location">
    <subcellularLocation>
        <location evidence="2">Cytoplasm</location>
    </subcellularLocation>
</comment>
<comment type="similarity">
    <text evidence="2">Belongs to the TRAFAC class translation factor GTPase superfamily. Classic translation factor GTPase family. EF-Tu/EF-1A subfamily.</text>
</comment>
<feature type="chain" id="PRO_0000091340" description="Elongation factor Tu">
    <location>
        <begin position="1"/>
        <end position="401"/>
    </location>
</feature>
<feature type="domain" description="tr-type G">
    <location>
        <begin position="10"/>
        <end position="211"/>
    </location>
</feature>
<feature type="region of interest" description="G1" evidence="1">
    <location>
        <begin position="19"/>
        <end position="26"/>
    </location>
</feature>
<feature type="region of interest" description="G2" evidence="1">
    <location>
        <begin position="62"/>
        <end position="66"/>
    </location>
</feature>
<feature type="region of interest" description="G3" evidence="1">
    <location>
        <begin position="83"/>
        <end position="86"/>
    </location>
</feature>
<feature type="region of interest" description="G4" evidence="1">
    <location>
        <begin position="138"/>
        <end position="141"/>
    </location>
</feature>
<feature type="region of interest" description="G5" evidence="1">
    <location>
        <begin position="179"/>
        <end position="181"/>
    </location>
</feature>
<feature type="binding site" evidence="2">
    <location>
        <begin position="19"/>
        <end position="26"/>
    </location>
    <ligand>
        <name>GTP</name>
        <dbReference type="ChEBI" id="CHEBI:37565"/>
    </ligand>
</feature>
<feature type="binding site" evidence="2">
    <location>
        <position position="26"/>
    </location>
    <ligand>
        <name>Mg(2+)</name>
        <dbReference type="ChEBI" id="CHEBI:18420"/>
    </ligand>
</feature>
<feature type="binding site" evidence="2">
    <location>
        <begin position="83"/>
        <end position="87"/>
    </location>
    <ligand>
        <name>GTP</name>
        <dbReference type="ChEBI" id="CHEBI:37565"/>
    </ligand>
</feature>
<feature type="binding site" evidence="2">
    <location>
        <begin position="138"/>
        <end position="141"/>
    </location>
    <ligand>
        <name>GTP</name>
        <dbReference type="ChEBI" id="CHEBI:37565"/>
    </ligand>
</feature>
<accession>Q9XD38</accession>
<accession>Q7CM62</accession>
<dbReference type="EC" id="3.6.5.3" evidence="2"/>
<dbReference type="EMBL" id="AF115283">
    <property type="protein sequence ID" value="AAD40614.1"/>
    <property type="molecule type" value="Genomic_DNA"/>
</dbReference>
<dbReference type="EMBL" id="AE010300">
    <property type="protein sequence ID" value="AAN47936.1"/>
    <property type="molecule type" value="Genomic_DNA"/>
</dbReference>
<dbReference type="RefSeq" id="NP_710918.1">
    <property type="nucleotide sequence ID" value="NC_004342.2"/>
</dbReference>
<dbReference type="RefSeq" id="WP_001040571.1">
    <property type="nucleotide sequence ID" value="NC_004342.2"/>
</dbReference>
<dbReference type="SMR" id="Q9XD38"/>
<dbReference type="FunCoup" id="Q9XD38">
    <property type="interactions" value="549"/>
</dbReference>
<dbReference type="STRING" id="189518.LA_0737"/>
<dbReference type="PaxDb" id="189518-LA_0737"/>
<dbReference type="EnsemblBacteria" id="AAN47936">
    <property type="protein sequence ID" value="AAN47936"/>
    <property type="gene ID" value="LA_0737"/>
</dbReference>
<dbReference type="GeneID" id="61142749"/>
<dbReference type="KEGG" id="lil:LA_0737"/>
<dbReference type="PATRIC" id="fig|189518.3.peg.741"/>
<dbReference type="HOGENOM" id="CLU_007265_0_1_12"/>
<dbReference type="InParanoid" id="Q9XD38"/>
<dbReference type="OrthoDB" id="9804504at2"/>
<dbReference type="Proteomes" id="UP000001408">
    <property type="component" value="Chromosome I"/>
</dbReference>
<dbReference type="GO" id="GO:0005737">
    <property type="term" value="C:cytoplasm"/>
    <property type="evidence" value="ECO:0007669"/>
    <property type="project" value="UniProtKB-SubCell"/>
</dbReference>
<dbReference type="GO" id="GO:0005525">
    <property type="term" value="F:GTP binding"/>
    <property type="evidence" value="ECO:0007669"/>
    <property type="project" value="UniProtKB-UniRule"/>
</dbReference>
<dbReference type="GO" id="GO:0003924">
    <property type="term" value="F:GTPase activity"/>
    <property type="evidence" value="ECO:0007669"/>
    <property type="project" value="InterPro"/>
</dbReference>
<dbReference type="GO" id="GO:0003746">
    <property type="term" value="F:translation elongation factor activity"/>
    <property type="evidence" value="ECO:0000318"/>
    <property type="project" value="GO_Central"/>
</dbReference>
<dbReference type="GO" id="GO:0006414">
    <property type="term" value="P:translational elongation"/>
    <property type="evidence" value="ECO:0000318"/>
    <property type="project" value="GO_Central"/>
</dbReference>
<dbReference type="CDD" id="cd01884">
    <property type="entry name" value="EF_Tu"/>
    <property type="match status" value="1"/>
</dbReference>
<dbReference type="CDD" id="cd03697">
    <property type="entry name" value="EFTU_II"/>
    <property type="match status" value="1"/>
</dbReference>
<dbReference type="CDD" id="cd03707">
    <property type="entry name" value="EFTU_III"/>
    <property type="match status" value="1"/>
</dbReference>
<dbReference type="FunFam" id="2.40.30.10:FF:000001">
    <property type="entry name" value="Elongation factor Tu"/>
    <property type="match status" value="1"/>
</dbReference>
<dbReference type="FunFam" id="3.40.50.300:FF:000003">
    <property type="entry name" value="Elongation factor Tu"/>
    <property type="match status" value="1"/>
</dbReference>
<dbReference type="Gene3D" id="3.40.50.300">
    <property type="entry name" value="P-loop containing nucleotide triphosphate hydrolases"/>
    <property type="match status" value="1"/>
</dbReference>
<dbReference type="Gene3D" id="2.40.30.10">
    <property type="entry name" value="Translation factors"/>
    <property type="match status" value="2"/>
</dbReference>
<dbReference type="HAMAP" id="MF_00118_B">
    <property type="entry name" value="EF_Tu_B"/>
    <property type="match status" value="1"/>
</dbReference>
<dbReference type="InterPro" id="IPR041709">
    <property type="entry name" value="EF-Tu_GTP-bd"/>
</dbReference>
<dbReference type="InterPro" id="IPR050055">
    <property type="entry name" value="EF-Tu_GTPase"/>
</dbReference>
<dbReference type="InterPro" id="IPR004161">
    <property type="entry name" value="EFTu-like_2"/>
</dbReference>
<dbReference type="InterPro" id="IPR033720">
    <property type="entry name" value="EFTU_2"/>
</dbReference>
<dbReference type="InterPro" id="IPR031157">
    <property type="entry name" value="G_TR_CS"/>
</dbReference>
<dbReference type="InterPro" id="IPR027417">
    <property type="entry name" value="P-loop_NTPase"/>
</dbReference>
<dbReference type="InterPro" id="IPR005225">
    <property type="entry name" value="Small_GTP-bd"/>
</dbReference>
<dbReference type="InterPro" id="IPR000795">
    <property type="entry name" value="T_Tr_GTP-bd_dom"/>
</dbReference>
<dbReference type="InterPro" id="IPR009000">
    <property type="entry name" value="Transl_B-barrel_sf"/>
</dbReference>
<dbReference type="InterPro" id="IPR009001">
    <property type="entry name" value="Transl_elong_EF1A/Init_IF2_C"/>
</dbReference>
<dbReference type="InterPro" id="IPR004541">
    <property type="entry name" value="Transl_elong_EFTu/EF1A_bac/org"/>
</dbReference>
<dbReference type="InterPro" id="IPR004160">
    <property type="entry name" value="Transl_elong_EFTu/EF1A_C"/>
</dbReference>
<dbReference type="NCBIfam" id="TIGR00485">
    <property type="entry name" value="EF-Tu"/>
    <property type="match status" value="1"/>
</dbReference>
<dbReference type="NCBIfam" id="NF000766">
    <property type="entry name" value="PRK00049.1"/>
    <property type="match status" value="1"/>
</dbReference>
<dbReference type="NCBIfam" id="NF009372">
    <property type="entry name" value="PRK12735.1"/>
    <property type="match status" value="1"/>
</dbReference>
<dbReference type="NCBIfam" id="NF009373">
    <property type="entry name" value="PRK12736.1"/>
    <property type="match status" value="1"/>
</dbReference>
<dbReference type="NCBIfam" id="TIGR00231">
    <property type="entry name" value="small_GTP"/>
    <property type="match status" value="1"/>
</dbReference>
<dbReference type="PANTHER" id="PTHR43721:SF22">
    <property type="entry name" value="ELONGATION FACTOR TU, MITOCHONDRIAL"/>
    <property type="match status" value="1"/>
</dbReference>
<dbReference type="PANTHER" id="PTHR43721">
    <property type="entry name" value="ELONGATION FACTOR TU-RELATED"/>
    <property type="match status" value="1"/>
</dbReference>
<dbReference type="Pfam" id="PF00009">
    <property type="entry name" value="GTP_EFTU"/>
    <property type="match status" value="1"/>
</dbReference>
<dbReference type="Pfam" id="PF03144">
    <property type="entry name" value="GTP_EFTU_D2"/>
    <property type="match status" value="1"/>
</dbReference>
<dbReference type="Pfam" id="PF03143">
    <property type="entry name" value="GTP_EFTU_D3"/>
    <property type="match status" value="1"/>
</dbReference>
<dbReference type="PRINTS" id="PR00315">
    <property type="entry name" value="ELONGATNFCT"/>
</dbReference>
<dbReference type="SUPFAM" id="SSF50465">
    <property type="entry name" value="EF-Tu/eEF-1alpha/eIF2-gamma C-terminal domain"/>
    <property type="match status" value="1"/>
</dbReference>
<dbReference type="SUPFAM" id="SSF52540">
    <property type="entry name" value="P-loop containing nucleoside triphosphate hydrolases"/>
    <property type="match status" value="1"/>
</dbReference>
<dbReference type="SUPFAM" id="SSF50447">
    <property type="entry name" value="Translation proteins"/>
    <property type="match status" value="1"/>
</dbReference>
<dbReference type="PROSITE" id="PS00301">
    <property type="entry name" value="G_TR_1"/>
    <property type="match status" value="1"/>
</dbReference>
<dbReference type="PROSITE" id="PS51722">
    <property type="entry name" value="G_TR_2"/>
    <property type="match status" value="1"/>
</dbReference>
<evidence type="ECO:0000250" key="1"/>
<evidence type="ECO:0000255" key="2">
    <source>
        <dbReference type="HAMAP-Rule" id="MF_00118"/>
    </source>
</evidence>